<accession>Q3YU30</accession>
<evidence type="ECO:0000255" key="1">
    <source>
        <dbReference type="HAMAP-Rule" id="MF_01191"/>
    </source>
</evidence>
<evidence type="ECO:0000305" key="2"/>
<organism>
    <name type="scientific">Shigella sonnei (strain Ss046)</name>
    <dbReference type="NCBI Taxonomy" id="300269"/>
    <lineage>
        <taxon>Bacteria</taxon>
        <taxon>Pseudomonadati</taxon>
        <taxon>Pseudomonadota</taxon>
        <taxon>Gammaproteobacteria</taxon>
        <taxon>Enterobacterales</taxon>
        <taxon>Enterobacteriaceae</taxon>
        <taxon>Shigella</taxon>
    </lineage>
</organism>
<gene>
    <name evidence="1" type="primary">yjjB</name>
    <name type="ordered locus">SSON_4509</name>
</gene>
<keyword id="KW-0997">Cell inner membrane</keyword>
<keyword id="KW-1003">Cell membrane</keyword>
<keyword id="KW-0472">Membrane</keyword>
<keyword id="KW-1185">Reference proteome</keyword>
<keyword id="KW-0812">Transmembrane</keyword>
<keyword id="KW-1133">Transmembrane helix</keyword>
<keyword id="KW-0813">Transport</keyword>
<reference key="1">
    <citation type="journal article" date="2005" name="Nucleic Acids Res.">
        <title>Genome dynamics and diversity of Shigella species, the etiologic agents of bacillary dysentery.</title>
        <authorList>
            <person name="Yang F."/>
            <person name="Yang J."/>
            <person name="Zhang X."/>
            <person name="Chen L."/>
            <person name="Jiang Y."/>
            <person name="Yan Y."/>
            <person name="Tang X."/>
            <person name="Wang J."/>
            <person name="Xiong Z."/>
            <person name="Dong J."/>
            <person name="Xue Y."/>
            <person name="Zhu Y."/>
            <person name="Xu X."/>
            <person name="Sun L."/>
            <person name="Chen S."/>
            <person name="Nie H."/>
            <person name="Peng J."/>
            <person name="Xu J."/>
            <person name="Wang Y."/>
            <person name="Yuan Z."/>
            <person name="Wen Y."/>
            <person name="Yao Z."/>
            <person name="Shen Y."/>
            <person name="Qiang B."/>
            <person name="Hou Y."/>
            <person name="Yu J."/>
            <person name="Jin Q."/>
        </authorList>
    </citation>
    <scope>NUCLEOTIDE SEQUENCE [LARGE SCALE GENOMIC DNA]</scope>
    <source>
        <strain>Ss046</strain>
    </source>
</reference>
<proteinExistence type="inferred from homology"/>
<protein>
    <recommendedName>
        <fullName evidence="1">Probable succinate transporter subunit YjjB</fullName>
    </recommendedName>
</protein>
<dbReference type="EMBL" id="CP000038">
    <property type="protein sequence ID" value="AAZ90982.1"/>
    <property type="status" value="ALT_INIT"/>
    <property type="molecule type" value="Genomic_DNA"/>
</dbReference>
<dbReference type="RefSeq" id="WP_000538176.1">
    <property type="nucleotide sequence ID" value="NC_007384.1"/>
</dbReference>
<dbReference type="KEGG" id="ssn:SSON_4509"/>
<dbReference type="HOGENOM" id="CLU_117642_1_0_6"/>
<dbReference type="Proteomes" id="UP000002529">
    <property type="component" value="Chromosome"/>
</dbReference>
<dbReference type="GO" id="GO:0005886">
    <property type="term" value="C:plasma membrane"/>
    <property type="evidence" value="ECO:0007669"/>
    <property type="project" value="UniProtKB-SubCell"/>
</dbReference>
<dbReference type="GO" id="GO:0015744">
    <property type="term" value="P:succinate transport"/>
    <property type="evidence" value="ECO:0007669"/>
    <property type="project" value="UniProtKB-UniRule"/>
</dbReference>
<dbReference type="HAMAP" id="MF_01191">
    <property type="entry name" value="YjjB"/>
    <property type="match status" value="1"/>
</dbReference>
<dbReference type="InterPro" id="IPR024528">
    <property type="entry name" value="ThrE_2"/>
</dbReference>
<dbReference type="InterPro" id="IPR050539">
    <property type="entry name" value="ThrE_Dicarb/AminoAcid_Exp"/>
</dbReference>
<dbReference type="InterPro" id="IPR020914">
    <property type="entry name" value="YjjB"/>
</dbReference>
<dbReference type="NCBIfam" id="NF007391">
    <property type="entry name" value="PRK09917.1"/>
    <property type="match status" value="1"/>
</dbReference>
<dbReference type="PANTHER" id="PTHR34390:SF1">
    <property type="entry name" value="SUCCINATE TRANSPORTER SUBUNIT YJJB-RELATED"/>
    <property type="match status" value="1"/>
</dbReference>
<dbReference type="PANTHER" id="PTHR34390">
    <property type="entry name" value="UPF0442 PROTEIN YJJB-RELATED"/>
    <property type="match status" value="1"/>
</dbReference>
<dbReference type="Pfam" id="PF12821">
    <property type="entry name" value="ThrE_2"/>
    <property type="match status" value="1"/>
</dbReference>
<feature type="chain" id="PRO_0000293680" description="Probable succinate transporter subunit YjjB">
    <location>
        <begin position="1"/>
        <end position="157"/>
    </location>
</feature>
<feature type="transmembrane region" description="Helical" evidence="1">
    <location>
        <begin position="8"/>
        <end position="28"/>
    </location>
</feature>
<feature type="transmembrane region" description="Helical" evidence="1">
    <location>
        <begin position="50"/>
        <end position="70"/>
    </location>
</feature>
<feature type="transmembrane region" description="Helical" evidence="1">
    <location>
        <begin position="87"/>
        <end position="107"/>
    </location>
</feature>
<feature type="transmembrane region" description="Helical" evidence="1">
    <location>
        <begin position="129"/>
        <end position="149"/>
    </location>
</feature>
<name>YJJB_SHISS</name>
<comment type="function">
    <text evidence="1">Involved in succinate export with YjjP. Both proteins are required for export.</text>
</comment>
<comment type="subunit">
    <text evidence="1">The transporter is composed of YjjB and YjjP.</text>
</comment>
<comment type="subcellular location">
    <subcellularLocation>
        <location evidence="1">Cell inner membrane</location>
        <topology evidence="1">Multi-pass membrane protein</topology>
    </subcellularLocation>
</comment>
<comment type="similarity">
    <text evidence="1">Belongs to the ThrE exporter (TC 2.A.79) family.</text>
</comment>
<comment type="sequence caution" evidence="2">
    <conflict type="erroneous initiation">
        <sequence resource="EMBL-CDS" id="AAZ90982"/>
    </conflict>
</comment>
<sequence>MGVIEFLFALAQDMILAAIPAVGFAMVFNVPVRALRWCALLGAIGHGSRMILMTSGLNIEWSTFMASMLVGTIGIQWSRWYLAHPKVFTVAAVIPMFPGISAYTAMISAVKISQLGYSEPLMITLLTNFLTASSIVGALSIGLSIPGLWLYRKRPRV</sequence>